<keyword id="KW-1040">Host Golgi apparatus</keyword>
<keyword id="KW-1043">Host membrane</keyword>
<keyword id="KW-0945">Host-virus interaction</keyword>
<keyword id="KW-0472">Membrane</keyword>
<keyword id="KW-1185">Reference proteome</keyword>
<keyword id="KW-0812">Transmembrane</keyword>
<keyword id="KW-1133">Transmembrane helix</keyword>
<organism>
    <name type="scientific">Human cytomegalovirus (strain Merlin)</name>
    <name type="common">HHV-5</name>
    <name type="synonym">Human herpesvirus 5</name>
    <dbReference type="NCBI Taxonomy" id="295027"/>
    <lineage>
        <taxon>Viruses</taxon>
        <taxon>Duplodnaviria</taxon>
        <taxon>Heunggongvirae</taxon>
        <taxon>Peploviricota</taxon>
        <taxon>Herviviricetes</taxon>
        <taxon>Herpesvirales</taxon>
        <taxon>Orthoherpesviridae</taxon>
        <taxon>Betaherpesvirinae</taxon>
        <taxon>Cytomegalovirus</taxon>
        <taxon>Cytomegalovirus humanbeta5</taxon>
        <taxon>Human cytomegalovirus</taxon>
    </lineage>
</organism>
<protein>
    <recommendedName>
        <fullName>Protein UL138</fullName>
    </recommendedName>
</protein>
<feature type="chain" id="PRO_0000418301" description="Protein UL138">
    <location>
        <begin position="1"/>
        <end position="169"/>
    </location>
</feature>
<feature type="transmembrane region" description="Helical" evidence="1">
    <location>
        <begin position="8"/>
        <end position="28"/>
    </location>
</feature>
<feature type="region of interest" description="Disordered" evidence="2">
    <location>
        <begin position="109"/>
        <end position="133"/>
    </location>
</feature>
<comment type="function">
    <text evidence="3 5 6 7 8 9 10">Plays an important role in the establishment of latent viral infection. Modulates the expression of several host cell surface receptors such as TNFR1, CD36 or the MRP1 transporter during productive infection (PubMed:23580527, PubMed:30894470). For instance, associates with host MRP1 and induces its lysosomal degradation (PubMed:23580527, PubMed:30894470). Plays an inhibitory role in the host cGAS/STING/TBK1 pathway and upstream of IRF3 phosphorylation and NF-kappa-B leading to inhibition of interferon beta production during both lytic and latent infections (PubMed:34903048). Also participates in the establishment of latency by sustaining an innate immune response through phosphorylation and activation of host STAT1 (PubMed:37289831).</text>
</comment>
<comment type="subunit">
    <text evidence="6 7 9 10">Interacts with host TNFR1 (PubMed:21976655). Interacts with host MRP1 (PubMed:23580527). Interacts with host UAF1/WDR48 (PubMed:37289831). Interacts with host STING1 (PubMed:34903048).</text>
</comment>
<comment type="subcellular location">
    <subcellularLocation>
        <location evidence="4 8 9">Host Golgi apparatus membrane</location>
    </subcellularLocation>
</comment>
<evidence type="ECO:0000255" key="1"/>
<evidence type="ECO:0000256" key="2">
    <source>
        <dbReference type="SAM" id="MobiDB-lite"/>
    </source>
</evidence>
<evidence type="ECO:0000269" key="3">
    <source>
    </source>
</evidence>
<evidence type="ECO:0000269" key="4">
    <source>
    </source>
</evidence>
<evidence type="ECO:0000269" key="5">
    <source>
    </source>
</evidence>
<evidence type="ECO:0000269" key="6">
    <source>
    </source>
</evidence>
<evidence type="ECO:0000269" key="7">
    <source>
    </source>
</evidence>
<evidence type="ECO:0000269" key="8">
    <source>
    </source>
</evidence>
<evidence type="ECO:0000269" key="9">
    <source>
    </source>
</evidence>
<evidence type="ECO:0000269" key="10">
    <source>
    </source>
</evidence>
<proteinExistence type="evidence at protein level"/>
<sequence length="169" mass="19309">MDDLPLNVGLPIIGVMLVLIVAILCYLAYHWHDTFKLVRMFLSYRWLIRCCELYGEYERRFADLSSLGLGAVRRESDRRYRFSERPDEILVRWEEVSSQCSYASSRITDRRAGSSSSSSVHVANQRNSVPPPDMAVTAPLTDVDLLKPVTGSATQFTTVAMVHYHQEYT</sequence>
<organismHost>
    <name type="scientific">Homo sapiens</name>
    <name type="common">Human</name>
    <dbReference type="NCBI Taxonomy" id="9606"/>
</organismHost>
<gene>
    <name type="primary">UL138</name>
</gene>
<dbReference type="EMBL" id="AY446894">
    <property type="protein sequence ID" value="AAR31682.1"/>
    <property type="molecule type" value="Genomic_DNA"/>
</dbReference>
<dbReference type="RefSeq" id="YP_081578.1">
    <property type="nucleotide sequence ID" value="NC_006273.2"/>
</dbReference>
<dbReference type="SMR" id="F5HGQ8"/>
<dbReference type="BioGRID" id="1677974">
    <property type="interactions" value="6"/>
</dbReference>
<dbReference type="DNASU" id="3077420"/>
<dbReference type="GeneID" id="3077420"/>
<dbReference type="KEGG" id="vg:3077420"/>
<dbReference type="Reactome" id="R-HSA-9609690">
    <property type="pathway name" value="HCMV Early Events"/>
</dbReference>
<dbReference type="Proteomes" id="UP000000938">
    <property type="component" value="Segment"/>
</dbReference>
<dbReference type="GO" id="GO:0044178">
    <property type="term" value="C:host cell Golgi membrane"/>
    <property type="evidence" value="ECO:0000314"/>
    <property type="project" value="UniProt"/>
</dbReference>
<dbReference type="GO" id="GO:0016020">
    <property type="term" value="C:membrane"/>
    <property type="evidence" value="ECO:0007669"/>
    <property type="project" value="UniProtKB-KW"/>
</dbReference>
<dbReference type="GO" id="GO:0060090">
    <property type="term" value="F:molecular adaptor activity"/>
    <property type="evidence" value="ECO:0000314"/>
    <property type="project" value="UniProt"/>
</dbReference>
<dbReference type="GO" id="GO:0046427">
    <property type="term" value="P:positive regulation of receptor signaling pathway via JAK-STAT"/>
    <property type="evidence" value="ECO:0000314"/>
    <property type="project" value="UniProt"/>
</dbReference>
<reference key="1">
    <citation type="journal article" date="2004" name="J. Gen. Virol.">
        <title>Genetic content of wild-type human cytomegalovirus.</title>
        <authorList>
            <person name="Dolan A."/>
            <person name="Cunningham C."/>
            <person name="Hector R.D."/>
            <person name="Hassan-Walker A.F."/>
            <person name="Lee L."/>
            <person name="Addison C."/>
            <person name="Dargan D.J."/>
            <person name="McGeoch D.J."/>
            <person name="Gatherer D."/>
            <person name="Emery V.C."/>
            <person name="Griffiths P.D."/>
            <person name="Sinzger C."/>
            <person name="McSharry B.P."/>
            <person name="Wilkinson G.W.G."/>
            <person name="Davison A.J."/>
        </authorList>
    </citation>
    <scope>NUCLEOTIDE SEQUENCE [LARGE SCALE GENOMIC DNA]</scope>
</reference>
<reference key="2">
    <citation type="journal article" date="2007" name="Blood">
        <title>Human cytomegalovirus sequences expressed in latently infected individuals promote a latent infection in vitro.</title>
        <authorList>
            <person name="Goodrum F."/>
            <person name="Reeves M."/>
            <person name="Sinclair J."/>
            <person name="High K."/>
            <person name="Shenk T."/>
        </authorList>
    </citation>
    <scope>FUNCTION</scope>
</reference>
<reference key="3">
    <citation type="journal article" date="2009" name="J. Virol.">
        <title>Characterization of a novel Golgi apparatus-localized latency determinant encoded by human cytomegalovirus.</title>
        <authorList>
            <person name="Petrucelli A."/>
            <person name="Rak M."/>
            <person name="Grainger L."/>
            <person name="Goodrum F."/>
        </authorList>
    </citation>
    <scope>SUBCELLULAR LOCATION</scope>
    <source>
        <strain>FIXwt</strain>
    </source>
</reference>
<reference key="4">
    <citation type="journal article" date="2011" name="J. Virol.">
        <title>The latency-associated UL138 gene product of human cytomegalovirus sensitizes cells to tumor necrosis factor alpha (TNF-alpha) signaling by upregulating TNF-alpha receptor 1 cell surface expression.</title>
        <authorList>
            <person name="Montag C."/>
            <person name="Wagner J.A."/>
            <person name="Gruska I."/>
            <person name="Vetter B."/>
            <person name="Wiebusch L."/>
            <person name="Hagemeier C."/>
        </authorList>
    </citation>
    <scope>FUNCTION</scope>
</reference>
<reference key="5">
    <citation type="journal article" date="2011" name="J. Virol.">
        <title>The cytomegaloviral protein pUL138 acts as potentiator of tumor necrosis factor (TNF) receptor 1 surface density to enhance ULb'-encoded modulation of TNF-alpha signaling.</title>
        <authorList>
            <person name="Le V.T."/>
            <person name="Trilling M."/>
            <person name="Hengel H."/>
        </authorList>
    </citation>
    <scope>FUNCTION</scope>
    <scope>INTERACTION WITH HOST TNFR1</scope>
    <source>
        <strain>Toledo</strain>
    </source>
</reference>
<reference key="6">
    <citation type="journal article" date="2013" name="Science">
        <title>Latency-associated degradation of the MRP1 drug transporter during latent human cytomegalovirus infection.</title>
        <authorList>
            <person name="Weekes M.P."/>
            <person name="Tan S.Y."/>
            <person name="Poole E."/>
            <person name="Talbot S."/>
            <person name="Antrobus R."/>
            <person name="Smith D.L."/>
            <person name="Montag C."/>
            <person name="Gygi S.P."/>
            <person name="Sinclair J.H."/>
            <person name="Lehner P.J."/>
        </authorList>
    </citation>
    <scope>FUNCTION</scope>
    <scope>INTERACTION WITH HOST MRP1</scope>
</reference>
<reference key="7">
    <citation type="journal article" date="2019" name="J. Virol.">
        <title>The Membrane-Spanning Peptide and Acidic Cluster Dileucine Sorting Motif of UL138 Are Required To Downregulate MRP1 Drug Transporter Function in Human Cytomegalovirus-Infected Cells.</title>
        <authorList>
            <person name="Gelbmann C.B."/>
            <person name="Kalejta R.F."/>
        </authorList>
    </citation>
    <scope>FUNCTION</scope>
    <scope>SUBCELLULAR LOCATION</scope>
</reference>
<reference key="8">
    <citation type="journal article" date="2021" name="MBio">
        <title>Human Cytomegalovirus UL138 Protein Inhibits the STING Pathway and Reduces Interferon Beta mRNA Accumulation during Lytic and Latent Infections.</title>
        <authorList>
            <person name="Albright E.R."/>
            <person name="Mickelson C.K."/>
            <person name="Kalejta R.F."/>
        </authorList>
    </citation>
    <scope>FUNCTION</scope>
    <scope>SUBCELLULAR LOCATION</scope>
    <scope>INTERACTION WITH HOST STING1</scope>
</reference>
<reference key="9">
    <citation type="journal article" date="2023" name="PLoS Pathog.">
        <title>Human Cytomegalovirus UL138 interaction with USP1 activates STAT1 in infection.</title>
        <authorList>
            <person name="Zarrella K."/>
            <person name="Longmire P."/>
            <person name="Zeltzer S."/>
            <person name="Collins-McMillen D."/>
            <person name="Hancock M."/>
            <person name="Buehler J."/>
            <person name="Reitsma J.M."/>
            <person name="Terhune S.S."/>
            <person name="Nelson J.A."/>
            <person name="Goodrum F."/>
        </authorList>
    </citation>
    <scope>FUNCTION</scope>
    <scope>INTERACTION WITH HOST UAF1/WDR48</scope>
</reference>
<accession>F5HGQ8</accession>
<name>UL138_HCMVM</name>